<name>ILVD_ALIFM</name>
<gene>
    <name evidence="1" type="primary">ilvD</name>
    <name type="ordered locus">VFMJ11_2694</name>
</gene>
<protein>
    <recommendedName>
        <fullName evidence="1">Dihydroxy-acid dehydratase</fullName>
        <shortName evidence="1">DAD</shortName>
        <ecNumber evidence="1">4.2.1.9</ecNumber>
    </recommendedName>
</protein>
<dbReference type="EC" id="4.2.1.9" evidence="1"/>
<dbReference type="EMBL" id="CP001139">
    <property type="protein sequence ID" value="ACH64916.1"/>
    <property type="molecule type" value="Genomic_DNA"/>
</dbReference>
<dbReference type="RefSeq" id="WP_011262897.1">
    <property type="nucleotide sequence ID" value="NC_011184.1"/>
</dbReference>
<dbReference type="SMR" id="B5FCY6"/>
<dbReference type="GeneID" id="54165309"/>
<dbReference type="KEGG" id="vfm:VFMJ11_2694"/>
<dbReference type="HOGENOM" id="CLU_014271_4_2_6"/>
<dbReference type="UniPathway" id="UPA00047">
    <property type="reaction ID" value="UER00057"/>
</dbReference>
<dbReference type="UniPathway" id="UPA00049">
    <property type="reaction ID" value="UER00061"/>
</dbReference>
<dbReference type="Proteomes" id="UP000001857">
    <property type="component" value="Chromosome I"/>
</dbReference>
<dbReference type="GO" id="GO:0005829">
    <property type="term" value="C:cytosol"/>
    <property type="evidence" value="ECO:0007669"/>
    <property type="project" value="TreeGrafter"/>
</dbReference>
<dbReference type="GO" id="GO:0051537">
    <property type="term" value="F:2 iron, 2 sulfur cluster binding"/>
    <property type="evidence" value="ECO:0007669"/>
    <property type="project" value="UniProtKB-UniRule"/>
</dbReference>
<dbReference type="GO" id="GO:0004160">
    <property type="term" value="F:dihydroxy-acid dehydratase activity"/>
    <property type="evidence" value="ECO:0007669"/>
    <property type="project" value="UniProtKB-UniRule"/>
</dbReference>
<dbReference type="GO" id="GO:0000287">
    <property type="term" value="F:magnesium ion binding"/>
    <property type="evidence" value="ECO:0007669"/>
    <property type="project" value="UniProtKB-UniRule"/>
</dbReference>
<dbReference type="GO" id="GO:0009097">
    <property type="term" value="P:isoleucine biosynthetic process"/>
    <property type="evidence" value="ECO:0007669"/>
    <property type="project" value="UniProtKB-UniRule"/>
</dbReference>
<dbReference type="GO" id="GO:0009099">
    <property type="term" value="P:L-valine biosynthetic process"/>
    <property type="evidence" value="ECO:0007669"/>
    <property type="project" value="UniProtKB-UniRule"/>
</dbReference>
<dbReference type="FunFam" id="3.50.30.80:FF:000001">
    <property type="entry name" value="Dihydroxy-acid dehydratase"/>
    <property type="match status" value="1"/>
</dbReference>
<dbReference type="Gene3D" id="3.50.30.80">
    <property type="entry name" value="IlvD/EDD C-terminal domain-like"/>
    <property type="match status" value="1"/>
</dbReference>
<dbReference type="HAMAP" id="MF_00012">
    <property type="entry name" value="IlvD"/>
    <property type="match status" value="1"/>
</dbReference>
<dbReference type="InterPro" id="IPR042096">
    <property type="entry name" value="Dihydro-acid_dehy_C"/>
</dbReference>
<dbReference type="InterPro" id="IPR004404">
    <property type="entry name" value="DihydroxyA_deHydtase"/>
</dbReference>
<dbReference type="InterPro" id="IPR020558">
    <property type="entry name" value="DiOHA_6PGluconate_deHydtase_CS"/>
</dbReference>
<dbReference type="InterPro" id="IPR056740">
    <property type="entry name" value="ILV_EDD_C"/>
</dbReference>
<dbReference type="InterPro" id="IPR000581">
    <property type="entry name" value="ILV_EDD_N"/>
</dbReference>
<dbReference type="InterPro" id="IPR037237">
    <property type="entry name" value="IlvD/EDD_N"/>
</dbReference>
<dbReference type="NCBIfam" id="TIGR00110">
    <property type="entry name" value="ilvD"/>
    <property type="match status" value="1"/>
</dbReference>
<dbReference type="NCBIfam" id="NF009103">
    <property type="entry name" value="PRK12448.1"/>
    <property type="match status" value="1"/>
</dbReference>
<dbReference type="PANTHER" id="PTHR43661">
    <property type="entry name" value="D-XYLONATE DEHYDRATASE"/>
    <property type="match status" value="1"/>
</dbReference>
<dbReference type="PANTHER" id="PTHR43661:SF3">
    <property type="entry name" value="D-XYLONATE DEHYDRATASE YAGF-RELATED"/>
    <property type="match status" value="1"/>
</dbReference>
<dbReference type="Pfam" id="PF24877">
    <property type="entry name" value="ILV_EDD_C"/>
    <property type="match status" value="1"/>
</dbReference>
<dbReference type="Pfam" id="PF00920">
    <property type="entry name" value="ILVD_EDD_N"/>
    <property type="match status" value="1"/>
</dbReference>
<dbReference type="SUPFAM" id="SSF143975">
    <property type="entry name" value="IlvD/EDD N-terminal domain-like"/>
    <property type="match status" value="1"/>
</dbReference>
<dbReference type="SUPFAM" id="SSF52016">
    <property type="entry name" value="LeuD/IlvD-like"/>
    <property type="match status" value="1"/>
</dbReference>
<dbReference type="PROSITE" id="PS00886">
    <property type="entry name" value="ILVD_EDD_1"/>
    <property type="match status" value="1"/>
</dbReference>
<dbReference type="PROSITE" id="PS00887">
    <property type="entry name" value="ILVD_EDD_2"/>
    <property type="match status" value="1"/>
</dbReference>
<keyword id="KW-0001">2Fe-2S</keyword>
<keyword id="KW-0028">Amino-acid biosynthesis</keyword>
<keyword id="KW-0100">Branched-chain amino acid biosynthesis</keyword>
<keyword id="KW-0408">Iron</keyword>
<keyword id="KW-0411">Iron-sulfur</keyword>
<keyword id="KW-0456">Lyase</keyword>
<keyword id="KW-0460">Magnesium</keyword>
<keyword id="KW-0479">Metal-binding</keyword>
<proteinExistence type="inferred from homology"/>
<reference key="1">
    <citation type="submission" date="2008-08" db="EMBL/GenBank/DDBJ databases">
        <title>Complete sequence of Vibrio fischeri strain MJ11.</title>
        <authorList>
            <person name="Mandel M.J."/>
            <person name="Stabb E.V."/>
            <person name="Ruby E.G."/>
            <person name="Ferriera S."/>
            <person name="Johnson J."/>
            <person name="Kravitz S."/>
            <person name="Beeson K."/>
            <person name="Sutton G."/>
            <person name="Rogers Y.-H."/>
            <person name="Friedman R."/>
            <person name="Frazier M."/>
            <person name="Venter J.C."/>
        </authorList>
    </citation>
    <scope>NUCLEOTIDE SEQUENCE [LARGE SCALE GENOMIC DNA]</scope>
    <source>
        <strain>MJ11</strain>
    </source>
</reference>
<comment type="function">
    <text evidence="1">Functions in the biosynthesis of branched-chain amino acids. Catalyzes the dehydration of (2R,3R)-2,3-dihydroxy-3-methylpentanoate (2,3-dihydroxy-3-methylvalerate) into 2-oxo-3-methylpentanoate (2-oxo-3-methylvalerate) and of (2R)-2,3-dihydroxy-3-methylbutanoate (2,3-dihydroxyisovalerate) into 2-oxo-3-methylbutanoate (2-oxoisovalerate), the penultimate precursor to L-isoleucine and L-valine, respectively.</text>
</comment>
<comment type="catalytic activity">
    <reaction evidence="1">
        <text>(2R)-2,3-dihydroxy-3-methylbutanoate = 3-methyl-2-oxobutanoate + H2O</text>
        <dbReference type="Rhea" id="RHEA:24809"/>
        <dbReference type="ChEBI" id="CHEBI:11851"/>
        <dbReference type="ChEBI" id="CHEBI:15377"/>
        <dbReference type="ChEBI" id="CHEBI:49072"/>
        <dbReference type="EC" id="4.2.1.9"/>
    </reaction>
    <physiologicalReaction direction="left-to-right" evidence="1">
        <dbReference type="Rhea" id="RHEA:24810"/>
    </physiologicalReaction>
</comment>
<comment type="catalytic activity">
    <reaction evidence="1">
        <text>(2R,3R)-2,3-dihydroxy-3-methylpentanoate = (S)-3-methyl-2-oxopentanoate + H2O</text>
        <dbReference type="Rhea" id="RHEA:27694"/>
        <dbReference type="ChEBI" id="CHEBI:15377"/>
        <dbReference type="ChEBI" id="CHEBI:35146"/>
        <dbReference type="ChEBI" id="CHEBI:49258"/>
        <dbReference type="EC" id="4.2.1.9"/>
    </reaction>
    <physiologicalReaction direction="left-to-right" evidence="1">
        <dbReference type="Rhea" id="RHEA:27695"/>
    </physiologicalReaction>
</comment>
<comment type="cofactor">
    <cofactor evidence="1">
        <name>[2Fe-2S] cluster</name>
        <dbReference type="ChEBI" id="CHEBI:190135"/>
    </cofactor>
    <text evidence="1">Binds 1 [2Fe-2S] cluster per subunit. This cluster acts as a Lewis acid cofactor.</text>
</comment>
<comment type="cofactor">
    <cofactor evidence="1">
        <name>Mg(2+)</name>
        <dbReference type="ChEBI" id="CHEBI:18420"/>
    </cofactor>
</comment>
<comment type="pathway">
    <text evidence="1">Amino-acid biosynthesis; L-isoleucine biosynthesis; L-isoleucine from 2-oxobutanoate: step 3/4.</text>
</comment>
<comment type="pathway">
    <text evidence="1">Amino-acid biosynthesis; L-valine biosynthesis; L-valine from pyruvate: step 3/4.</text>
</comment>
<comment type="subunit">
    <text evidence="1">Homodimer.</text>
</comment>
<comment type="similarity">
    <text evidence="1">Belongs to the IlvD/Edd family.</text>
</comment>
<evidence type="ECO:0000255" key="1">
    <source>
        <dbReference type="HAMAP-Rule" id="MF_00012"/>
    </source>
</evidence>
<sequence length="613" mass="65621">MPTYRSATTTHGRNMAGARALWRATGVKEDDFGKPIIAVVNSFTQFVPGHVHLKDMGQLVAGEIEKAGGIAKEFNTIAVDDGIAMGHGGMLYSLPSRELIADSVEYMVNAHCADAMVCISNCDKITPGMMMAAMRLNIPVIFVSGGPMEAGKTKLSDQIIKLDLVDAMIQGADPTVSDAQSEQIERSACPTCGSCSGMFTANSMNCLTEALGLSQPGNGSMLATHADREQLFINAGKRIVELTKRYYEQDDESALPRNIADRAAFENAMALDIAMGGSSNTVLHLLASAQEGEIDFDMGDIDEMSRRVPHLCKVAPSTPKYHMEDVHRAGGVMAILGELDRAGLLNNQTKTVLGLTMQEQLAQYDIMQTEDEEILKFFRAGPAGIRTTKAFSQDCRWDRLDDDRKEGCIRTKENAFSQEGGLAVLSGNIAVDGCIVKTAGVDEENLKFQGPAIVFESQDSAVEGILGGKVKAGEVVVIRYEGPKGGPGMQEMLYPTTYLKSMGLGKACALLTDGRFSGGTSGLSIGHASPEAASGGTIGLVNDGDIITIDIPSRSITLDVPESELQARRAKQDELGWKPVNRQREVSFALKAYASMATSADKGAVRDKSKLEG</sequence>
<accession>B5FCY6</accession>
<feature type="chain" id="PRO_1000089428" description="Dihydroxy-acid dehydratase">
    <location>
        <begin position="1"/>
        <end position="613"/>
    </location>
</feature>
<feature type="active site" description="Proton acceptor" evidence="1">
    <location>
        <position position="517"/>
    </location>
</feature>
<feature type="binding site" evidence="1">
    <location>
        <position position="81"/>
    </location>
    <ligand>
        <name>Mg(2+)</name>
        <dbReference type="ChEBI" id="CHEBI:18420"/>
    </ligand>
</feature>
<feature type="binding site" evidence="1">
    <location>
        <position position="122"/>
    </location>
    <ligand>
        <name>[2Fe-2S] cluster</name>
        <dbReference type="ChEBI" id="CHEBI:190135"/>
    </ligand>
</feature>
<feature type="binding site" evidence="1">
    <location>
        <position position="123"/>
    </location>
    <ligand>
        <name>Mg(2+)</name>
        <dbReference type="ChEBI" id="CHEBI:18420"/>
    </ligand>
</feature>
<feature type="binding site" description="via carbamate group" evidence="1">
    <location>
        <position position="124"/>
    </location>
    <ligand>
        <name>Mg(2+)</name>
        <dbReference type="ChEBI" id="CHEBI:18420"/>
    </ligand>
</feature>
<feature type="binding site" evidence="1">
    <location>
        <position position="195"/>
    </location>
    <ligand>
        <name>[2Fe-2S] cluster</name>
        <dbReference type="ChEBI" id="CHEBI:190135"/>
    </ligand>
</feature>
<feature type="binding site" evidence="1">
    <location>
        <position position="491"/>
    </location>
    <ligand>
        <name>Mg(2+)</name>
        <dbReference type="ChEBI" id="CHEBI:18420"/>
    </ligand>
</feature>
<feature type="modified residue" description="N6-carboxylysine" evidence="1">
    <location>
        <position position="124"/>
    </location>
</feature>
<organism>
    <name type="scientific">Aliivibrio fischeri (strain MJ11)</name>
    <name type="common">Vibrio fischeri</name>
    <dbReference type="NCBI Taxonomy" id="388396"/>
    <lineage>
        <taxon>Bacteria</taxon>
        <taxon>Pseudomonadati</taxon>
        <taxon>Pseudomonadota</taxon>
        <taxon>Gammaproteobacteria</taxon>
        <taxon>Vibrionales</taxon>
        <taxon>Vibrionaceae</taxon>
        <taxon>Aliivibrio</taxon>
    </lineage>
</organism>